<name>BZPO_DICDI</name>
<organism>
    <name type="scientific">Dictyostelium discoideum</name>
    <name type="common">Social amoeba</name>
    <dbReference type="NCBI Taxonomy" id="44689"/>
    <lineage>
        <taxon>Eukaryota</taxon>
        <taxon>Amoebozoa</taxon>
        <taxon>Evosea</taxon>
        <taxon>Eumycetozoa</taxon>
        <taxon>Dictyostelia</taxon>
        <taxon>Dictyosteliales</taxon>
        <taxon>Dictyosteliaceae</taxon>
        <taxon>Dictyostelium</taxon>
    </lineage>
</organism>
<gene>
    <name type="primary">bzpO</name>
    <name type="ORF">DDB_G0290169</name>
</gene>
<reference key="1">
    <citation type="journal article" date="2005" name="Nature">
        <title>The genome of the social amoeba Dictyostelium discoideum.</title>
        <authorList>
            <person name="Eichinger L."/>
            <person name="Pachebat J.A."/>
            <person name="Gloeckner G."/>
            <person name="Rajandream M.A."/>
            <person name="Sucgang R."/>
            <person name="Berriman M."/>
            <person name="Song J."/>
            <person name="Olsen R."/>
            <person name="Szafranski K."/>
            <person name="Xu Q."/>
            <person name="Tunggal B."/>
            <person name="Kummerfeld S."/>
            <person name="Madera M."/>
            <person name="Konfortov B.A."/>
            <person name="Rivero F."/>
            <person name="Bankier A.T."/>
            <person name="Lehmann R."/>
            <person name="Hamlin N."/>
            <person name="Davies R."/>
            <person name="Gaudet P."/>
            <person name="Fey P."/>
            <person name="Pilcher K."/>
            <person name="Chen G."/>
            <person name="Saunders D."/>
            <person name="Sodergren E.J."/>
            <person name="Davis P."/>
            <person name="Kerhornou A."/>
            <person name="Nie X."/>
            <person name="Hall N."/>
            <person name="Anjard C."/>
            <person name="Hemphill L."/>
            <person name="Bason N."/>
            <person name="Farbrother P."/>
            <person name="Desany B."/>
            <person name="Just E."/>
            <person name="Morio T."/>
            <person name="Rost R."/>
            <person name="Churcher C.M."/>
            <person name="Cooper J."/>
            <person name="Haydock S."/>
            <person name="van Driessche N."/>
            <person name="Cronin A."/>
            <person name="Goodhead I."/>
            <person name="Muzny D.M."/>
            <person name="Mourier T."/>
            <person name="Pain A."/>
            <person name="Lu M."/>
            <person name="Harper D."/>
            <person name="Lindsay R."/>
            <person name="Hauser H."/>
            <person name="James K.D."/>
            <person name="Quiles M."/>
            <person name="Madan Babu M."/>
            <person name="Saito T."/>
            <person name="Buchrieser C."/>
            <person name="Wardroper A."/>
            <person name="Felder M."/>
            <person name="Thangavelu M."/>
            <person name="Johnson D."/>
            <person name="Knights A."/>
            <person name="Loulseged H."/>
            <person name="Mungall K.L."/>
            <person name="Oliver K."/>
            <person name="Price C."/>
            <person name="Quail M.A."/>
            <person name="Urushihara H."/>
            <person name="Hernandez J."/>
            <person name="Rabbinowitsch E."/>
            <person name="Steffen D."/>
            <person name="Sanders M."/>
            <person name="Ma J."/>
            <person name="Kohara Y."/>
            <person name="Sharp S."/>
            <person name="Simmonds M.N."/>
            <person name="Spiegler S."/>
            <person name="Tivey A."/>
            <person name="Sugano S."/>
            <person name="White B."/>
            <person name="Walker D."/>
            <person name="Woodward J.R."/>
            <person name="Winckler T."/>
            <person name="Tanaka Y."/>
            <person name="Shaulsky G."/>
            <person name="Schleicher M."/>
            <person name="Weinstock G.M."/>
            <person name="Rosenthal A."/>
            <person name="Cox E.C."/>
            <person name="Chisholm R.L."/>
            <person name="Gibbs R.A."/>
            <person name="Loomis W.F."/>
            <person name="Platzer M."/>
            <person name="Kay R.R."/>
            <person name="Williams J.G."/>
            <person name="Dear P.H."/>
            <person name="Noegel A.A."/>
            <person name="Barrell B.G."/>
            <person name="Kuspa A."/>
        </authorList>
    </citation>
    <scope>NUCLEOTIDE SEQUENCE [LARGE SCALE GENOMIC DNA]</scope>
    <source>
        <strain>AX4</strain>
    </source>
</reference>
<reference key="2">
    <citation type="journal article" date="2006" name="Development">
        <title>bZIP transcription factor interactions regulate DIF responses in Dictyostelium.</title>
        <authorList>
            <person name="Huang E."/>
            <person name="Blagg S.L."/>
            <person name="Keller T."/>
            <person name="Katoh M."/>
            <person name="Shaulsky G."/>
            <person name="Thompson C.R.L."/>
        </authorList>
    </citation>
    <scope>IDENTIFICATION</scope>
</reference>
<keyword id="KW-0175">Coiled coil</keyword>
<keyword id="KW-0238">DNA-binding</keyword>
<keyword id="KW-0539">Nucleus</keyword>
<keyword id="KW-1185">Reference proteome</keyword>
<keyword id="KW-0804">Transcription</keyword>
<keyword id="KW-0805">Transcription regulation</keyword>
<accession>Q54GH0</accession>
<evidence type="ECO:0000250" key="1"/>
<evidence type="ECO:0000255" key="2"/>
<evidence type="ECO:0000256" key="3">
    <source>
        <dbReference type="SAM" id="MobiDB-lite"/>
    </source>
</evidence>
<evidence type="ECO:0000305" key="4"/>
<dbReference type="EMBL" id="AAFI02000158">
    <property type="protein sequence ID" value="EAL62356.1"/>
    <property type="molecule type" value="Genomic_DNA"/>
</dbReference>
<dbReference type="RefSeq" id="XP_635858.1">
    <property type="nucleotide sequence ID" value="XM_630766.1"/>
</dbReference>
<dbReference type="SMR" id="Q54GH0"/>
<dbReference type="FunCoup" id="Q54GH0">
    <property type="interactions" value="388"/>
</dbReference>
<dbReference type="STRING" id="44689.Q54GH0"/>
<dbReference type="GlyGen" id="Q54GH0">
    <property type="glycosylation" value="3 sites"/>
</dbReference>
<dbReference type="PaxDb" id="44689-DDB0216391"/>
<dbReference type="EnsemblProtists" id="EAL62356">
    <property type="protein sequence ID" value="EAL62356"/>
    <property type="gene ID" value="DDB_G0290169"/>
</dbReference>
<dbReference type="GeneID" id="8627514"/>
<dbReference type="KEGG" id="ddi:DDB_G0290169"/>
<dbReference type="dictyBase" id="DDB_G0290169">
    <property type="gene designation" value="bzpO"/>
</dbReference>
<dbReference type="VEuPathDB" id="AmoebaDB:DDB_G0290169"/>
<dbReference type="HOGENOM" id="CLU_386090_0_0_1"/>
<dbReference type="InParanoid" id="Q54GH0"/>
<dbReference type="OMA" id="IEERYSH"/>
<dbReference type="PRO" id="PR:Q54GH0"/>
<dbReference type="Proteomes" id="UP000002195">
    <property type="component" value="Chromosome 5"/>
</dbReference>
<dbReference type="GO" id="GO:0005634">
    <property type="term" value="C:nucleus"/>
    <property type="evidence" value="ECO:0000318"/>
    <property type="project" value="GO_Central"/>
</dbReference>
<dbReference type="GO" id="GO:0003700">
    <property type="term" value="F:DNA-binding transcription factor activity"/>
    <property type="evidence" value="ECO:0007669"/>
    <property type="project" value="InterPro"/>
</dbReference>
<dbReference type="GO" id="GO:0043565">
    <property type="term" value="F:sequence-specific DNA binding"/>
    <property type="evidence" value="ECO:0000318"/>
    <property type="project" value="GO_Central"/>
</dbReference>
<dbReference type="GO" id="GO:0010468">
    <property type="term" value="P:regulation of gene expression"/>
    <property type="evidence" value="ECO:0000318"/>
    <property type="project" value="GO_Central"/>
</dbReference>
<dbReference type="CDD" id="cd14686">
    <property type="entry name" value="bZIP"/>
    <property type="match status" value="1"/>
</dbReference>
<dbReference type="Gene3D" id="1.20.5.170">
    <property type="match status" value="1"/>
</dbReference>
<dbReference type="InterPro" id="IPR004827">
    <property type="entry name" value="bZIP"/>
</dbReference>
<dbReference type="InterPro" id="IPR046347">
    <property type="entry name" value="bZIP_sf"/>
</dbReference>
<dbReference type="PANTHER" id="PTHR14312">
    <property type="entry name" value="CREB/ATF BZIP TRANSCRIPTION FACTOR"/>
    <property type="match status" value="1"/>
</dbReference>
<dbReference type="PANTHER" id="PTHR14312:SF2">
    <property type="entry name" value="GLYCOSYLTRANSFERASE-RELATED"/>
    <property type="match status" value="1"/>
</dbReference>
<dbReference type="SMART" id="SM00338">
    <property type="entry name" value="BRLZ"/>
    <property type="match status" value="1"/>
</dbReference>
<dbReference type="SUPFAM" id="SSF57959">
    <property type="entry name" value="Leucine zipper domain"/>
    <property type="match status" value="1"/>
</dbReference>
<comment type="function">
    <text evidence="1">Probable transcriptional regulator.</text>
</comment>
<comment type="subcellular location">
    <subcellularLocation>
        <location evidence="1">Nucleus</location>
    </subcellularLocation>
</comment>
<comment type="similarity">
    <text evidence="4">Belongs to the bZIP family.</text>
</comment>
<sequence length="716" mass="83397">MDGYQNFLPIPPENNTWLLLLDDFSQLQQQQQQQQQQQQQQQQQQQQQQQQQQQQQQQQQQQQQQQQQQQQQFPQQYTNDGINVQSIESNNYLNNNNFNFNERLESLQKQQQEQQTQIQQQLQNYQQQYQDQYQQRQQQYQDQYQKPYELPSQYIDQCNQIFSNYNNNNNITSINYNMNNNNNSNNSNNNSNNNNNNNNNNNNNNNNNNNNNNNNNNNNNNNNNNKTTDNINNVNSINNLNNINLGANNVNNNVNSNVVSNVNNNAISQNKPIFPPFNDNPINIQQQQQQQQQQECYKIPQYKISLDNTNNPIITPTITPTLTTFPTITPTLITPTTIAPITPTPTPTPILTTTTTKTTKINLEETNEKTKIINETKKQEKSTESIKKMNQNKASRNYRQKKKDYIKEIEDKLSLLEMENSKIQKENQTLRKTGSVDLMKPSNDIMKMMTDCKTITNQLKLSLERNDDRSLIYLLHQYHRVIEERYSHIEYEAEKVANPYVQLRLSIVGYTPGQFCPFVLNIFNDNNDDGDNQKVTNDHNWYNTFKKEANITPEQSNKLDSIRFQHTKVSASMFKEIQMLDLEIKSFFYKFIFSYPSDPLSSLNPTELVYNSTTTTPIDSYSLPAIDKQLELAGKLESLKNKLTLNGGLMLDTFSSISSLLTPRQEAIFLVGVDPYAFINFSHFDIINDVWSNIINKPFSGPVHMAQSLNKMFNHS</sequence>
<proteinExistence type="inferred from homology"/>
<feature type="chain" id="PRO_0000383605" description="Probable basic-leucine zipper transcription factor O">
    <location>
        <begin position="1"/>
        <end position="716"/>
    </location>
</feature>
<feature type="domain" description="bZIP">
    <location>
        <begin position="381"/>
        <end position="444"/>
    </location>
</feature>
<feature type="region of interest" description="Disordered" evidence="3">
    <location>
        <begin position="173"/>
        <end position="233"/>
    </location>
</feature>
<feature type="region of interest" description="Basic motif" evidence="1">
    <location>
        <begin position="387"/>
        <end position="403"/>
    </location>
</feature>
<feature type="region of interest" description="Leucine-zipper" evidence="1">
    <location>
        <begin position="406"/>
        <end position="413"/>
    </location>
</feature>
<feature type="coiled-coil region" evidence="2">
    <location>
        <begin position="20"/>
        <end position="142"/>
    </location>
</feature>
<protein>
    <recommendedName>
        <fullName>Probable basic-leucine zipper transcription factor O</fullName>
    </recommendedName>
</protein>